<protein>
    <recommendedName>
        <fullName evidence="1">Elongation factor P</fullName>
        <shortName evidence="1">EF-P</shortName>
    </recommendedName>
</protein>
<evidence type="ECO:0000255" key="1">
    <source>
        <dbReference type="HAMAP-Rule" id="MF_00141"/>
    </source>
</evidence>
<sequence>MKISANSIRTGNILVYNNDLWVVSKTPEHTQPGKGGAYVQVEMKNLKTGTKRNERFSSADYLDKAELEQKDYQFLYFEGDDLVLMDTKHFDQINISKEMLEEKLSFLTENIIVKVEFYNDKPLNIELPPTVILEISETDPVIKGATATASYKPAILENGIKVKVPQYLEIGEKIVVKTDDMTYVERAK</sequence>
<comment type="function">
    <text evidence="1">Involved in peptide bond synthesis. Stimulates efficient translation and peptide-bond synthesis on native or reconstituted 70S ribosomes in vitro. Probably functions indirectly by altering the affinity of the ribosome for aminoacyl-tRNA, thus increasing their reactivity as acceptors for peptidyl transferase.</text>
</comment>
<comment type="pathway">
    <text evidence="1">Protein biosynthesis; polypeptide chain elongation.</text>
</comment>
<comment type="subcellular location">
    <subcellularLocation>
        <location evidence="1">Cytoplasm</location>
    </subcellularLocation>
</comment>
<comment type="similarity">
    <text evidence="1">Belongs to the elongation factor P family.</text>
</comment>
<reference key="1">
    <citation type="journal article" date="2009" name="PLoS ONE">
        <title>Genome sequence of the endosymbiont Rickettsia peacockii and comparison with virulent Rickettsia rickettsii: identification of virulence factors.</title>
        <authorList>
            <person name="Felsheim R.F."/>
            <person name="Kurtti T.J."/>
            <person name="Munderloh U.G."/>
        </authorList>
    </citation>
    <scope>NUCLEOTIDE SEQUENCE [LARGE SCALE GENOMIC DNA]</scope>
    <source>
        <strain>Rustic</strain>
    </source>
</reference>
<organism>
    <name type="scientific">Rickettsia peacockii (strain Rustic)</name>
    <dbReference type="NCBI Taxonomy" id="562019"/>
    <lineage>
        <taxon>Bacteria</taxon>
        <taxon>Pseudomonadati</taxon>
        <taxon>Pseudomonadota</taxon>
        <taxon>Alphaproteobacteria</taxon>
        <taxon>Rickettsiales</taxon>
        <taxon>Rickettsiaceae</taxon>
        <taxon>Rickettsieae</taxon>
        <taxon>Rickettsia</taxon>
        <taxon>spotted fever group</taxon>
    </lineage>
</organism>
<dbReference type="EMBL" id="CP001227">
    <property type="protein sequence ID" value="ACR47204.1"/>
    <property type="molecule type" value="Genomic_DNA"/>
</dbReference>
<dbReference type="RefSeq" id="WP_012736487.1">
    <property type="nucleotide sequence ID" value="NC_012730.1"/>
</dbReference>
<dbReference type="SMR" id="C4K0V3"/>
<dbReference type="KEGG" id="rpk:RPR_01615"/>
<dbReference type="HOGENOM" id="CLU_074944_1_1_5"/>
<dbReference type="UniPathway" id="UPA00345"/>
<dbReference type="Proteomes" id="UP000005015">
    <property type="component" value="Chromosome"/>
</dbReference>
<dbReference type="GO" id="GO:0005737">
    <property type="term" value="C:cytoplasm"/>
    <property type="evidence" value="ECO:0007669"/>
    <property type="project" value="UniProtKB-SubCell"/>
</dbReference>
<dbReference type="GO" id="GO:0003746">
    <property type="term" value="F:translation elongation factor activity"/>
    <property type="evidence" value="ECO:0007669"/>
    <property type="project" value="UniProtKB-UniRule"/>
</dbReference>
<dbReference type="GO" id="GO:0043043">
    <property type="term" value="P:peptide biosynthetic process"/>
    <property type="evidence" value="ECO:0007669"/>
    <property type="project" value="InterPro"/>
</dbReference>
<dbReference type="CDD" id="cd04470">
    <property type="entry name" value="S1_EF-P_repeat_1"/>
    <property type="match status" value="1"/>
</dbReference>
<dbReference type="FunFam" id="2.40.50.140:FF:000004">
    <property type="entry name" value="Elongation factor P"/>
    <property type="match status" value="1"/>
</dbReference>
<dbReference type="FunFam" id="2.40.50.140:FF:000009">
    <property type="entry name" value="Elongation factor P"/>
    <property type="match status" value="1"/>
</dbReference>
<dbReference type="Gene3D" id="2.30.30.30">
    <property type="match status" value="1"/>
</dbReference>
<dbReference type="Gene3D" id="2.40.50.140">
    <property type="entry name" value="Nucleic acid-binding proteins"/>
    <property type="match status" value="2"/>
</dbReference>
<dbReference type="HAMAP" id="MF_00141">
    <property type="entry name" value="EF_P"/>
    <property type="match status" value="1"/>
</dbReference>
<dbReference type="InterPro" id="IPR015365">
    <property type="entry name" value="Elong-fact-P_C"/>
</dbReference>
<dbReference type="InterPro" id="IPR012340">
    <property type="entry name" value="NA-bd_OB-fold"/>
</dbReference>
<dbReference type="InterPro" id="IPR014722">
    <property type="entry name" value="Rib_uL2_dom2"/>
</dbReference>
<dbReference type="InterPro" id="IPR020599">
    <property type="entry name" value="Transl_elong_fac_P/YeiP"/>
</dbReference>
<dbReference type="InterPro" id="IPR013185">
    <property type="entry name" value="Transl_elong_KOW-like"/>
</dbReference>
<dbReference type="InterPro" id="IPR001059">
    <property type="entry name" value="Transl_elong_P/YeiP_cen"/>
</dbReference>
<dbReference type="InterPro" id="IPR013852">
    <property type="entry name" value="Transl_elong_P/YeiP_CS"/>
</dbReference>
<dbReference type="InterPro" id="IPR011768">
    <property type="entry name" value="Transl_elongation_fac_P"/>
</dbReference>
<dbReference type="InterPro" id="IPR008991">
    <property type="entry name" value="Translation_prot_SH3-like_sf"/>
</dbReference>
<dbReference type="NCBIfam" id="TIGR00038">
    <property type="entry name" value="efp"/>
    <property type="match status" value="1"/>
</dbReference>
<dbReference type="NCBIfam" id="NF001810">
    <property type="entry name" value="PRK00529.1"/>
    <property type="match status" value="1"/>
</dbReference>
<dbReference type="PANTHER" id="PTHR30053">
    <property type="entry name" value="ELONGATION FACTOR P"/>
    <property type="match status" value="1"/>
</dbReference>
<dbReference type="PANTHER" id="PTHR30053:SF14">
    <property type="entry name" value="TRANSLATION ELONGATION FACTOR KOW-LIKE DOMAIN-CONTAINING PROTEIN"/>
    <property type="match status" value="1"/>
</dbReference>
<dbReference type="Pfam" id="PF01132">
    <property type="entry name" value="EFP"/>
    <property type="match status" value="1"/>
</dbReference>
<dbReference type="Pfam" id="PF08207">
    <property type="entry name" value="EFP_N"/>
    <property type="match status" value="1"/>
</dbReference>
<dbReference type="Pfam" id="PF09285">
    <property type="entry name" value="Elong-fact-P_C"/>
    <property type="match status" value="1"/>
</dbReference>
<dbReference type="PIRSF" id="PIRSF005901">
    <property type="entry name" value="EF-P"/>
    <property type="match status" value="1"/>
</dbReference>
<dbReference type="SMART" id="SM01185">
    <property type="entry name" value="EFP"/>
    <property type="match status" value="1"/>
</dbReference>
<dbReference type="SMART" id="SM00841">
    <property type="entry name" value="Elong-fact-P_C"/>
    <property type="match status" value="1"/>
</dbReference>
<dbReference type="SUPFAM" id="SSF50249">
    <property type="entry name" value="Nucleic acid-binding proteins"/>
    <property type="match status" value="2"/>
</dbReference>
<dbReference type="SUPFAM" id="SSF50104">
    <property type="entry name" value="Translation proteins SH3-like domain"/>
    <property type="match status" value="1"/>
</dbReference>
<dbReference type="PROSITE" id="PS01275">
    <property type="entry name" value="EFP"/>
    <property type="match status" value="1"/>
</dbReference>
<proteinExistence type="inferred from homology"/>
<accession>C4K0V3</accession>
<feature type="chain" id="PRO_1000203279" description="Elongation factor P">
    <location>
        <begin position="1"/>
        <end position="188"/>
    </location>
</feature>
<gene>
    <name evidence="1" type="primary">efp</name>
    <name type="ordered locus">RPR_01615</name>
</gene>
<name>EFP_RICPU</name>
<keyword id="KW-0963">Cytoplasm</keyword>
<keyword id="KW-0251">Elongation factor</keyword>
<keyword id="KW-0648">Protein biosynthesis</keyword>